<accession>P06651</accession>
<dbReference type="EMBL" id="M14487">
    <property type="protein sequence ID" value="AAA30038.1"/>
    <property type="molecule type" value="mRNA"/>
</dbReference>
<dbReference type="PIR" id="A26483">
    <property type="entry name" value="A26483"/>
</dbReference>
<dbReference type="RefSeq" id="NP_999683.1">
    <property type="nucleotide sequence ID" value="NM_214518.1"/>
</dbReference>
<dbReference type="STRING" id="7668.P06651"/>
<dbReference type="EnsemblMetazoa" id="NM_214518">
    <property type="protein sequence ID" value="NP_999683"/>
    <property type="gene ID" value="GeneID_373276"/>
</dbReference>
<dbReference type="GeneID" id="373276"/>
<dbReference type="KEGG" id="spu:373276"/>
<dbReference type="CTD" id="373276"/>
<dbReference type="eggNOG" id="ENOG502SXKB">
    <property type="taxonomic scope" value="Eukaryota"/>
</dbReference>
<dbReference type="HOGENOM" id="CLU_255139_0_0_1"/>
<dbReference type="InParanoid" id="P06651"/>
<dbReference type="OMA" id="CPEADQG"/>
<dbReference type="OrthoDB" id="10072653at2759"/>
<dbReference type="Proteomes" id="UP000007110">
    <property type="component" value="Unassembled WGS sequence"/>
</dbReference>
<dbReference type="GO" id="GO:0043160">
    <property type="term" value="C:acrosomal lumen"/>
    <property type="evidence" value="ECO:0007669"/>
    <property type="project" value="UniProtKB-SubCell"/>
</dbReference>
<dbReference type="GO" id="GO:0007155">
    <property type="term" value="P:cell adhesion"/>
    <property type="evidence" value="ECO:0007669"/>
    <property type="project" value="UniProtKB-KW"/>
</dbReference>
<dbReference type="GO" id="GO:0007342">
    <property type="term" value="P:fusion of sperm to egg plasma membrane involved in single fertilization"/>
    <property type="evidence" value="ECO:0007669"/>
    <property type="project" value="InterPro"/>
</dbReference>
<dbReference type="InterPro" id="IPR000775">
    <property type="entry name" value="Bindin"/>
</dbReference>
<dbReference type="Pfam" id="PF02084">
    <property type="entry name" value="Bindin"/>
    <property type="match status" value="1"/>
</dbReference>
<dbReference type="PRINTS" id="PR00761">
    <property type="entry name" value="BINDIN"/>
</dbReference>
<protein>
    <recommendedName>
        <fullName>Bindin</fullName>
    </recommendedName>
</protein>
<organism>
    <name type="scientific">Strongylocentrotus purpuratus</name>
    <name type="common">Purple sea urchin</name>
    <dbReference type="NCBI Taxonomy" id="7668"/>
    <lineage>
        <taxon>Eukaryota</taxon>
        <taxon>Metazoa</taxon>
        <taxon>Echinodermata</taxon>
        <taxon>Eleutherozoa</taxon>
        <taxon>Echinozoa</taxon>
        <taxon>Echinoidea</taxon>
        <taxon>Euechinoidea</taxon>
        <taxon>Echinacea</taxon>
        <taxon>Camarodonta</taxon>
        <taxon>Echinidea</taxon>
        <taxon>Strongylocentrotidae</taxon>
        <taxon>Strongylocentrotus</taxon>
    </lineage>
</organism>
<keyword id="KW-0130">Cell adhesion</keyword>
<keyword id="KW-0165">Cleavage on pair of basic residues</keyword>
<keyword id="KW-0968">Cytoplasmic vesicle</keyword>
<keyword id="KW-0278">Fertilization</keyword>
<keyword id="KW-1185">Reference proteome</keyword>
<keyword id="KW-0732">Signal</keyword>
<proteinExistence type="evidence at transcript level"/>
<evidence type="ECO:0000255" key="1"/>
<evidence type="ECO:0000256" key="2">
    <source>
        <dbReference type="SAM" id="MobiDB-lite"/>
    </source>
</evidence>
<evidence type="ECO:0000305" key="3"/>
<reference key="1">
    <citation type="journal article" date="1986" name="Proc. Natl. Acad. Sci. U.S.A.">
        <title>Sequence of mRNA coding for bindin, a species-specific sea urchin sperm protein required for fertilization.</title>
        <authorList>
            <person name="Gao B."/>
            <person name="Klein L.E."/>
            <person name="Britten R.J."/>
            <person name="Davidson E.H."/>
        </authorList>
    </citation>
    <scope>NUCLEOTIDE SEQUENCE [MRNA]</scope>
</reference>
<comment type="function">
    <text>Species-specific sea urchin sperm protein required for adhesion of sperm to the egg surface during fertilization. Bindin coats the acrosomal process after it is externalized by the acrosome reaction. It binds to sulfated, fucose-containing polysaccharides on the vitelline layer receptor proteoglycans which cover the egg plasma membrane.</text>
</comment>
<comment type="subcellular location">
    <subcellularLocation>
        <location>Cytoplasmic vesicle</location>
        <location>Secretory vesicle</location>
        <location>Acrosome lumen</location>
    </subcellularLocation>
</comment>
<comment type="similarity">
    <text evidence="3">Belongs to the bindin family.</text>
</comment>
<sequence length="481" mass="51200">MGFHQILVTVVALALASVRAEFPSRTDSPTDCPEADQGCWCRGSFAQCWRTYEEAGMTGEIGNRITKLDLLYQPSEEIVTYIRRSSAMRELRISEDGVSLDCSCDLIYALDDKHVTLVDQAELTFSNCQQRGWPRDSMTARSFVNRCHVSRMQDGDLRKRRESEDVDDDDVSKRASPRKGDEPAGHTLKDLAPQNTNHLVSIDGADKHPADELVNFISGHSPTRRATDNDAAVSDDSKRGARKKRYVNTMGYPQAMSPQMGGVNYGQPAQQGYGAQGMGGPVGGGPMGGPPQFGALPPGQADTDFGSSSSSVDGGDTTISARVMDDIKAVLGATKIDLPVDINDPYDLGLLLRHLRHHSNLLANIGDPAVREQVLSAMQEEEEEEEEDAATGAQQGVLNGNAPGQAGFGGGGGGGAMMSPQQMGGQPQGMIGQPQGMGFPHEGMGGPPQGMGMPHQGMGGPPQGMGMPPQGQPYGQGYLQG</sequence>
<name>BIND_STRPU</name>
<feature type="signal peptide">
    <location>
        <begin position="1"/>
        <end position="20"/>
    </location>
</feature>
<feature type="propeptide" id="PRO_0000020815">
    <location>
        <begin position="21"/>
        <end position="245"/>
    </location>
</feature>
<feature type="chain" id="PRO_0000020816" description="Bindin">
    <location>
        <begin position="246"/>
        <end position="481"/>
    </location>
</feature>
<feature type="region of interest" description="Disordered" evidence="2">
    <location>
        <begin position="154"/>
        <end position="193"/>
    </location>
</feature>
<feature type="region of interest" description="Disordered" evidence="2">
    <location>
        <begin position="219"/>
        <end position="243"/>
    </location>
</feature>
<feature type="region of interest" description="Fucose-binding domain" evidence="1">
    <location>
        <begin position="352"/>
        <end position="360"/>
    </location>
</feature>
<feature type="region of interest" description="Disordered" evidence="2">
    <location>
        <begin position="376"/>
        <end position="481"/>
    </location>
</feature>
<feature type="compositionally biased region" description="Basic and acidic residues" evidence="2">
    <location>
        <begin position="154"/>
        <end position="163"/>
    </location>
</feature>
<feature type="compositionally biased region" description="Basic and acidic residues" evidence="2">
    <location>
        <begin position="178"/>
        <end position="189"/>
    </location>
</feature>
<feature type="compositionally biased region" description="Acidic residues" evidence="2">
    <location>
        <begin position="379"/>
        <end position="389"/>
    </location>
</feature>
<feature type="compositionally biased region" description="Gly residues" evidence="2">
    <location>
        <begin position="406"/>
        <end position="416"/>
    </location>
</feature>
<feature type="compositionally biased region" description="Low complexity" evidence="2">
    <location>
        <begin position="417"/>
        <end position="440"/>
    </location>
</feature>
<feature type="compositionally biased region" description="Low complexity" evidence="2">
    <location>
        <begin position="464"/>
        <end position="481"/>
    </location>
</feature>